<comment type="function">
    <text evidence="1">One of the primary rRNA binding proteins, it binds directly to 16S rRNA where it nucleates assembly of the body of the 30S subunit.</text>
</comment>
<comment type="function">
    <text evidence="1">With S5 and S12 plays an important role in translational accuracy.</text>
</comment>
<comment type="subunit">
    <text evidence="1">Part of the 30S ribosomal subunit. Contacts protein S5. The interaction surface between S4 and S5 is involved in control of translational fidelity (By similarity).</text>
</comment>
<comment type="similarity">
    <text evidence="3">Belongs to the universal ribosomal protein uS4 family.</text>
</comment>
<evidence type="ECO:0000250" key="1"/>
<evidence type="ECO:0000255" key="2">
    <source>
        <dbReference type="HAMAP-Rule" id="MF_01306"/>
    </source>
</evidence>
<evidence type="ECO:0000305" key="3"/>
<name>RS4B_CLOPE</name>
<organism>
    <name type="scientific">Clostridium perfringens (strain 13 / Type A)</name>
    <dbReference type="NCBI Taxonomy" id="195102"/>
    <lineage>
        <taxon>Bacteria</taxon>
        <taxon>Bacillati</taxon>
        <taxon>Bacillota</taxon>
        <taxon>Clostridia</taxon>
        <taxon>Eubacteriales</taxon>
        <taxon>Clostridiaceae</taxon>
        <taxon>Clostridium</taxon>
    </lineage>
</organism>
<sequence length="197" mass="22934">MAKMMGPRFKMCRRLGLNVVGHPKAMKRAGRGTSRADKKLSDYGIQLLEKQRLRAYYGVMERQFTRYVDQAFNSKEQPGEALLMILESRLDNMVYRMGFASSIRQARQMVNHGHFLVNGKKVNIPSFRLNIGDEVVLREKSRKTEMFVNNFKDSIGSEVPYVSKEEDNFKGIFTRKPKREEIPITIQEQLIVEFYSK</sequence>
<protein>
    <recommendedName>
        <fullName evidence="2">Small ribosomal subunit protein uS4B</fullName>
    </recommendedName>
    <alternativeName>
        <fullName evidence="3">30S ribosomal protein S4 2</fullName>
    </alternativeName>
</protein>
<proteinExistence type="inferred from homology"/>
<accession>Q8XHW7</accession>
<feature type="chain" id="PRO_0000132371" description="Small ribosomal subunit protein uS4B">
    <location>
        <begin position="1"/>
        <end position="197"/>
    </location>
</feature>
<feature type="domain" description="S4 RNA-binding">
    <location>
        <begin position="88"/>
        <end position="150"/>
    </location>
</feature>
<keyword id="KW-1185">Reference proteome</keyword>
<keyword id="KW-0687">Ribonucleoprotein</keyword>
<keyword id="KW-0689">Ribosomal protein</keyword>
<keyword id="KW-0694">RNA-binding</keyword>
<keyword id="KW-0699">rRNA-binding</keyword>
<dbReference type="EMBL" id="BA000016">
    <property type="protein sequence ID" value="BAB82065.1"/>
    <property type="molecule type" value="Genomic_DNA"/>
</dbReference>
<dbReference type="SMR" id="Q8XHW7"/>
<dbReference type="STRING" id="195102.gene:10491676"/>
<dbReference type="KEGG" id="cpe:CPE2359"/>
<dbReference type="HOGENOM" id="CLU_092403_0_1_9"/>
<dbReference type="Proteomes" id="UP000000818">
    <property type="component" value="Chromosome"/>
</dbReference>
<dbReference type="GO" id="GO:0015935">
    <property type="term" value="C:small ribosomal subunit"/>
    <property type="evidence" value="ECO:0007669"/>
    <property type="project" value="InterPro"/>
</dbReference>
<dbReference type="GO" id="GO:0019843">
    <property type="term" value="F:rRNA binding"/>
    <property type="evidence" value="ECO:0007669"/>
    <property type="project" value="UniProtKB-UniRule"/>
</dbReference>
<dbReference type="GO" id="GO:0003735">
    <property type="term" value="F:structural constituent of ribosome"/>
    <property type="evidence" value="ECO:0007669"/>
    <property type="project" value="InterPro"/>
</dbReference>
<dbReference type="GO" id="GO:0042274">
    <property type="term" value="P:ribosomal small subunit biogenesis"/>
    <property type="evidence" value="ECO:0007669"/>
    <property type="project" value="TreeGrafter"/>
</dbReference>
<dbReference type="GO" id="GO:0006412">
    <property type="term" value="P:translation"/>
    <property type="evidence" value="ECO:0007669"/>
    <property type="project" value="UniProtKB-UniRule"/>
</dbReference>
<dbReference type="CDD" id="cd00165">
    <property type="entry name" value="S4"/>
    <property type="match status" value="1"/>
</dbReference>
<dbReference type="FunFam" id="3.10.290.10:FF:000001">
    <property type="entry name" value="30S ribosomal protein S4"/>
    <property type="match status" value="1"/>
</dbReference>
<dbReference type="Gene3D" id="1.10.1050.10">
    <property type="entry name" value="Ribosomal Protein S4 Delta 41, Chain A, domain 1"/>
    <property type="match status" value="1"/>
</dbReference>
<dbReference type="Gene3D" id="3.10.290.10">
    <property type="entry name" value="RNA-binding S4 domain"/>
    <property type="match status" value="1"/>
</dbReference>
<dbReference type="HAMAP" id="MF_01306_B">
    <property type="entry name" value="Ribosomal_uS4_B"/>
    <property type="match status" value="1"/>
</dbReference>
<dbReference type="InterPro" id="IPR022801">
    <property type="entry name" value="Ribosomal_uS4"/>
</dbReference>
<dbReference type="InterPro" id="IPR005709">
    <property type="entry name" value="Ribosomal_uS4_bac-type"/>
</dbReference>
<dbReference type="InterPro" id="IPR018079">
    <property type="entry name" value="Ribosomal_uS4_CS"/>
</dbReference>
<dbReference type="InterPro" id="IPR001912">
    <property type="entry name" value="Ribosomal_uS4_N"/>
</dbReference>
<dbReference type="InterPro" id="IPR002942">
    <property type="entry name" value="S4_RNA-bd"/>
</dbReference>
<dbReference type="InterPro" id="IPR036986">
    <property type="entry name" value="S4_RNA-bd_sf"/>
</dbReference>
<dbReference type="NCBIfam" id="NF003717">
    <property type="entry name" value="PRK05327.1"/>
    <property type="match status" value="1"/>
</dbReference>
<dbReference type="NCBIfam" id="TIGR01017">
    <property type="entry name" value="rpsD_bact"/>
    <property type="match status" value="1"/>
</dbReference>
<dbReference type="PANTHER" id="PTHR11831">
    <property type="entry name" value="30S 40S RIBOSOMAL PROTEIN"/>
    <property type="match status" value="1"/>
</dbReference>
<dbReference type="PANTHER" id="PTHR11831:SF4">
    <property type="entry name" value="SMALL RIBOSOMAL SUBUNIT PROTEIN US4M"/>
    <property type="match status" value="1"/>
</dbReference>
<dbReference type="Pfam" id="PF00163">
    <property type="entry name" value="Ribosomal_S4"/>
    <property type="match status" value="1"/>
</dbReference>
<dbReference type="Pfam" id="PF01479">
    <property type="entry name" value="S4"/>
    <property type="match status" value="1"/>
</dbReference>
<dbReference type="SMART" id="SM01390">
    <property type="entry name" value="Ribosomal_S4"/>
    <property type="match status" value="1"/>
</dbReference>
<dbReference type="SMART" id="SM00363">
    <property type="entry name" value="S4"/>
    <property type="match status" value="1"/>
</dbReference>
<dbReference type="SUPFAM" id="SSF55174">
    <property type="entry name" value="Alpha-L RNA-binding motif"/>
    <property type="match status" value="1"/>
</dbReference>
<dbReference type="PROSITE" id="PS00632">
    <property type="entry name" value="RIBOSOMAL_S4"/>
    <property type="match status" value="1"/>
</dbReference>
<dbReference type="PROSITE" id="PS50889">
    <property type="entry name" value="S4"/>
    <property type="match status" value="1"/>
</dbReference>
<reference key="1">
    <citation type="journal article" date="2002" name="Proc. Natl. Acad. Sci. U.S.A.">
        <title>Complete genome sequence of Clostridium perfringens, an anaerobic flesh-eater.</title>
        <authorList>
            <person name="Shimizu T."/>
            <person name="Ohtani K."/>
            <person name="Hirakawa H."/>
            <person name="Ohshima K."/>
            <person name="Yamashita A."/>
            <person name="Shiba T."/>
            <person name="Ogasawara N."/>
            <person name="Hattori M."/>
            <person name="Kuhara S."/>
            <person name="Hayashi H."/>
        </authorList>
    </citation>
    <scope>NUCLEOTIDE SEQUENCE [LARGE SCALE GENOMIC DNA]</scope>
    <source>
        <strain>13 / Type A</strain>
    </source>
</reference>
<gene>
    <name type="primary">rpsD2</name>
    <name type="ordered locus">CPE2359</name>
</gene>